<protein>
    <recommendedName>
        <fullName>Mediator of RNA polymerase II transcription subunit 7</fullName>
    </recommendedName>
    <alternativeName>
        <fullName>Mediator complex subunit 7</fullName>
    </alternativeName>
</protein>
<reference key="1">
    <citation type="journal article" date="2005" name="Nature">
        <title>Sequencing of Aspergillus nidulans and comparative analysis with A. fumigatus and A. oryzae.</title>
        <authorList>
            <person name="Galagan J.E."/>
            <person name="Calvo S.E."/>
            <person name="Cuomo C."/>
            <person name="Ma L.-J."/>
            <person name="Wortman J.R."/>
            <person name="Batzoglou S."/>
            <person name="Lee S.-I."/>
            <person name="Bastuerkmen M."/>
            <person name="Spevak C.C."/>
            <person name="Clutterbuck J."/>
            <person name="Kapitonov V."/>
            <person name="Jurka J."/>
            <person name="Scazzocchio C."/>
            <person name="Farman M.L."/>
            <person name="Butler J."/>
            <person name="Purcell S."/>
            <person name="Harris S."/>
            <person name="Braus G.H."/>
            <person name="Draht O."/>
            <person name="Busch S."/>
            <person name="D'Enfert C."/>
            <person name="Bouchier C."/>
            <person name="Goldman G.H."/>
            <person name="Bell-Pedersen D."/>
            <person name="Griffiths-Jones S."/>
            <person name="Doonan J.H."/>
            <person name="Yu J."/>
            <person name="Vienken K."/>
            <person name="Pain A."/>
            <person name="Freitag M."/>
            <person name="Selker E.U."/>
            <person name="Archer D.B."/>
            <person name="Penalva M.A."/>
            <person name="Oakley B.R."/>
            <person name="Momany M."/>
            <person name="Tanaka T."/>
            <person name="Kumagai T."/>
            <person name="Asai K."/>
            <person name="Machida M."/>
            <person name="Nierman W.C."/>
            <person name="Denning D.W."/>
            <person name="Caddick M.X."/>
            <person name="Hynes M."/>
            <person name="Paoletti M."/>
            <person name="Fischer R."/>
            <person name="Miller B.L."/>
            <person name="Dyer P.S."/>
            <person name="Sachs M.S."/>
            <person name="Osmani S.A."/>
            <person name="Birren B.W."/>
        </authorList>
    </citation>
    <scope>NUCLEOTIDE SEQUENCE [LARGE SCALE GENOMIC DNA]</scope>
    <source>
        <strain>FGSC A4 / ATCC 38163 / CBS 112.46 / NRRL 194 / M139</strain>
    </source>
</reference>
<reference key="2">
    <citation type="journal article" date="2009" name="Fungal Genet. Biol.">
        <title>The 2008 update of the Aspergillus nidulans genome annotation: a community effort.</title>
        <authorList>
            <person name="Wortman J.R."/>
            <person name="Gilsenan J.M."/>
            <person name="Joardar V."/>
            <person name="Deegan J."/>
            <person name="Clutterbuck J."/>
            <person name="Andersen M.R."/>
            <person name="Archer D."/>
            <person name="Bencina M."/>
            <person name="Braus G."/>
            <person name="Coutinho P."/>
            <person name="von Dohren H."/>
            <person name="Doonan J."/>
            <person name="Driessen A.J."/>
            <person name="Durek P."/>
            <person name="Espeso E."/>
            <person name="Fekete E."/>
            <person name="Flipphi M."/>
            <person name="Estrada C.G."/>
            <person name="Geysens S."/>
            <person name="Goldman G."/>
            <person name="de Groot P.W."/>
            <person name="Hansen K."/>
            <person name="Harris S.D."/>
            <person name="Heinekamp T."/>
            <person name="Helmstaedt K."/>
            <person name="Henrissat B."/>
            <person name="Hofmann G."/>
            <person name="Homan T."/>
            <person name="Horio T."/>
            <person name="Horiuchi H."/>
            <person name="James S."/>
            <person name="Jones M."/>
            <person name="Karaffa L."/>
            <person name="Karanyi Z."/>
            <person name="Kato M."/>
            <person name="Keller N."/>
            <person name="Kelly D.E."/>
            <person name="Kiel J.A."/>
            <person name="Kim J.M."/>
            <person name="van der Klei I.J."/>
            <person name="Klis F.M."/>
            <person name="Kovalchuk A."/>
            <person name="Krasevec N."/>
            <person name="Kubicek C.P."/>
            <person name="Liu B."/>
            <person name="Maccabe A."/>
            <person name="Meyer V."/>
            <person name="Mirabito P."/>
            <person name="Miskei M."/>
            <person name="Mos M."/>
            <person name="Mullins J."/>
            <person name="Nelson D.R."/>
            <person name="Nielsen J."/>
            <person name="Oakley B.R."/>
            <person name="Osmani S.A."/>
            <person name="Pakula T."/>
            <person name="Paszewski A."/>
            <person name="Paulsen I."/>
            <person name="Pilsyk S."/>
            <person name="Pocsi I."/>
            <person name="Punt P.J."/>
            <person name="Ram A.F."/>
            <person name="Ren Q."/>
            <person name="Robellet X."/>
            <person name="Robson G."/>
            <person name="Seiboth B."/>
            <person name="van Solingen P."/>
            <person name="Specht T."/>
            <person name="Sun J."/>
            <person name="Taheri-Talesh N."/>
            <person name="Takeshita N."/>
            <person name="Ussery D."/>
            <person name="vanKuyk P.A."/>
            <person name="Visser H."/>
            <person name="van de Vondervoort P.J."/>
            <person name="de Vries R.P."/>
            <person name="Walton J."/>
            <person name="Xiang X."/>
            <person name="Xiong Y."/>
            <person name="Zeng A.P."/>
            <person name="Brandt B.W."/>
            <person name="Cornell M.J."/>
            <person name="van den Hondel C.A."/>
            <person name="Visser J."/>
            <person name="Oliver S.G."/>
            <person name="Turner G."/>
        </authorList>
    </citation>
    <scope>GENOME REANNOTATION</scope>
    <source>
        <strain>FGSC A4 / ATCC 38163 / CBS 112.46 / NRRL 194 / M139</strain>
    </source>
</reference>
<accession>Q5BBF7</accession>
<accession>C8VM05</accession>
<evidence type="ECO:0000250" key="1"/>
<evidence type="ECO:0000256" key="2">
    <source>
        <dbReference type="SAM" id="MobiDB-lite"/>
    </source>
</evidence>
<evidence type="ECO:0000305" key="3"/>
<keyword id="KW-0010">Activator</keyword>
<keyword id="KW-0539">Nucleus</keyword>
<keyword id="KW-1185">Reference proteome</keyword>
<keyword id="KW-0804">Transcription</keyword>
<keyword id="KW-0805">Transcription regulation</keyword>
<name>MED7_EMENI</name>
<comment type="function">
    <text evidence="1">Component of the Mediator complex, a coactivator involved in the regulated transcription of nearly all RNA polymerase II-dependent genes. Mediator functions as a bridge to convey information from gene-specific regulatory proteins to the basal RNA polymerase II transcription machinery. Mediator is recruited to promoters by direct interactions with regulatory proteins and serves as a scaffold for the assembly of a functional preinitiation complex with RNA polymerase II and the general transcription factors (By similarity).</text>
</comment>
<comment type="subunit">
    <text evidence="1">Component of the Mediator complex.</text>
</comment>
<comment type="subcellular location">
    <subcellularLocation>
        <location evidence="1">Nucleus</location>
    </subcellularLocation>
</comment>
<comment type="similarity">
    <text evidence="3">Belongs to the Mediator complex subunit 7 family.</text>
</comment>
<gene>
    <name type="primary">med7</name>
    <name type="ORF">AN2123</name>
</gene>
<sequence length="259" mass="29318">MAEPGRTFNTAFAPPPPLWKHFTPENLQRLENIKKEASKGEDGRRRKKEWSPAELRSLKIPPELRFLVPPEIPSEQYSIFGEVQNLSTALPSLEEQGITQLYPSSPKPDTKSGDSSQPAQPLNHAYYLLKISKSLLLNFLEFVGILSVAPEQFEPKVEDIRNLFINAHHLLNLYRPHQARESLIMMMEAQLARTKDEIQQMDKLKEEVNAVLDQLAAEGADVGSTIQSTTKDKKGVKPEDQIPEDSKLLWDILDGKLDD</sequence>
<proteinExistence type="inferred from homology"/>
<organism>
    <name type="scientific">Emericella nidulans (strain FGSC A4 / ATCC 38163 / CBS 112.46 / NRRL 194 / M139)</name>
    <name type="common">Aspergillus nidulans</name>
    <dbReference type="NCBI Taxonomy" id="227321"/>
    <lineage>
        <taxon>Eukaryota</taxon>
        <taxon>Fungi</taxon>
        <taxon>Dikarya</taxon>
        <taxon>Ascomycota</taxon>
        <taxon>Pezizomycotina</taxon>
        <taxon>Eurotiomycetes</taxon>
        <taxon>Eurotiomycetidae</taxon>
        <taxon>Eurotiales</taxon>
        <taxon>Aspergillaceae</taxon>
        <taxon>Aspergillus</taxon>
        <taxon>Aspergillus subgen. Nidulantes</taxon>
    </lineage>
</organism>
<feature type="chain" id="PRO_0000303202" description="Mediator of RNA polymerase II transcription subunit 7">
    <location>
        <begin position="1"/>
        <end position="259"/>
    </location>
</feature>
<feature type="region of interest" description="Disordered" evidence="2">
    <location>
        <begin position="1"/>
        <end position="52"/>
    </location>
</feature>
<feature type="region of interest" description="Disordered" evidence="2">
    <location>
        <begin position="99"/>
        <end position="118"/>
    </location>
</feature>
<feature type="region of interest" description="Disordered" evidence="2">
    <location>
        <begin position="223"/>
        <end position="242"/>
    </location>
</feature>
<feature type="compositionally biased region" description="Basic and acidic residues" evidence="2">
    <location>
        <begin position="31"/>
        <end position="44"/>
    </location>
</feature>
<feature type="compositionally biased region" description="Basic and acidic residues" evidence="2">
    <location>
        <begin position="230"/>
        <end position="242"/>
    </location>
</feature>
<dbReference type="EMBL" id="AACD01000032">
    <property type="protein sequence ID" value="EAA64955.1"/>
    <property type="molecule type" value="Genomic_DNA"/>
</dbReference>
<dbReference type="EMBL" id="BN001307">
    <property type="protein sequence ID" value="CBF86223.1"/>
    <property type="molecule type" value="Genomic_DNA"/>
</dbReference>
<dbReference type="RefSeq" id="XP_659727.1">
    <property type="nucleotide sequence ID" value="XM_654635.1"/>
</dbReference>
<dbReference type="SMR" id="Q5BBF7"/>
<dbReference type="FunCoup" id="Q5BBF7">
    <property type="interactions" value="708"/>
</dbReference>
<dbReference type="STRING" id="227321.Q5BBF7"/>
<dbReference type="EnsemblFungi" id="CBF86223">
    <property type="protein sequence ID" value="CBF86223"/>
    <property type="gene ID" value="ANIA_02123"/>
</dbReference>
<dbReference type="KEGG" id="ani:ANIA_02123"/>
<dbReference type="VEuPathDB" id="FungiDB:AN2123"/>
<dbReference type="eggNOG" id="KOG0570">
    <property type="taxonomic scope" value="Eukaryota"/>
</dbReference>
<dbReference type="HOGENOM" id="CLU_065214_0_1_1"/>
<dbReference type="InParanoid" id="Q5BBF7"/>
<dbReference type="OMA" id="MMQDHLD"/>
<dbReference type="OrthoDB" id="10253553at2759"/>
<dbReference type="Proteomes" id="UP000000560">
    <property type="component" value="Chromosome VII"/>
</dbReference>
<dbReference type="GO" id="GO:0070847">
    <property type="term" value="C:core mediator complex"/>
    <property type="evidence" value="ECO:0000318"/>
    <property type="project" value="GO_Central"/>
</dbReference>
<dbReference type="GO" id="GO:0016592">
    <property type="term" value="C:mediator complex"/>
    <property type="evidence" value="ECO:0000318"/>
    <property type="project" value="GO_Central"/>
</dbReference>
<dbReference type="GO" id="GO:0003712">
    <property type="term" value="F:transcription coregulator activity"/>
    <property type="evidence" value="ECO:0007669"/>
    <property type="project" value="InterPro"/>
</dbReference>
<dbReference type="GO" id="GO:0006357">
    <property type="term" value="P:regulation of transcription by RNA polymerase II"/>
    <property type="evidence" value="ECO:0000318"/>
    <property type="project" value="GO_Central"/>
</dbReference>
<dbReference type="Gene3D" id="6.10.140.1520">
    <property type="match status" value="1"/>
</dbReference>
<dbReference type="Gene3D" id="6.10.140.200">
    <property type="match status" value="1"/>
</dbReference>
<dbReference type="InterPro" id="IPR037212">
    <property type="entry name" value="Med7/Med21-like"/>
</dbReference>
<dbReference type="InterPro" id="IPR009244">
    <property type="entry name" value="Mediatior_Med7"/>
</dbReference>
<dbReference type="InterPro" id="IPR044888">
    <property type="entry name" value="Mediatior_Med7_sf"/>
</dbReference>
<dbReference type="PANTHER" id="PTHR21428">
    <property type="entry name" value="MEDIATOR OF RNA POLYMERASE II TRANSCRIPTION SUBUNIT 7"/>
    <property type="match status" value="1"/>
</dbReference>
<dbReference type="PANTHER" id="PTHR21428:SF11">
    <property type="entry name" value="MEDIATOR OF RNA POLYMERASE II TRANSCRIPTION SUBUNIT 7"/>
    <property type="match status" value="1"/>
</dbReference>
<dbReference type="Pfam" id="PF05983">
    <property type="entry name" value="Med7"/>
    <property type="match status" value="1"/>
</dbReference>
<dbReference type="SUPFAM" id="SSF140718">
    <property type="entry name" value="Mediator hinge subcomplex-like"/>
    <property type="match status" value="1"/>
</dbReference>